<proteinExistence type="evidence at transcript level"/>
<protein>
    <recommendedName>
        <fullName>Integrator complex subunit 12</fullName>
        <shortName>Int12</shortName>
    </recommendedName>
</protein>
<dbReference type="EMBL" id="BC121396">
    <property type="protein sequence ID" value="AAI21397.1"/>
    <property type="molecule type" value="mRNA"/>
</dbReference>
<dbReference type="RefSeq" id="NP_001072325.1">
    <property type="nucleotide sequence ID" value="NM_001078857.1"/>
</dbReference>
<dbReference type="SMR" id="Q0V9U1"/>
<dbReference type="FunCoup" id="Q0V9U1">
    <property type="interactions" value="3131"/>
</dbReference>
<dbReference type="STRING" id="8364.ENSXETP00000023679"/>
<dbReference type="PaxDb" id="8364-ENSXETP00000030789"/>
<dbReference type="GeneID" id="779778"/>
<dbReference type="KEGG" id="xtr:779778"/>
<dbReference type="AGR" id="Xenbase:XB-GENE-977203"/>
<dbReference type="CTD" id="57117"/>
<dbReference type="Xenbase" id="XB-GENE-977203">
    <property type="gene designation" value="ints12"/>
</dbReference>
<dbReference type="eggNOG" id="KOG4323">
    <property type="taxonomic scope" value="Eukaryota"/>
</dbReference>
<dbReference type="InParanoid" id="Q0V9U1"/>
<dbReference type="OrthoDB" id="5846437at2759"/>
<dbReference type="Reactome" id="R-XTR-6807505">
    <property type="pathway name" value="RNA polymerase II transcribes snRNA genes"/>
</dbReference>
<dbReference type="Proteomes" id="UP000008143">
    <property type="component" value="Chromosome 1"/>
</dbReference>
<dbReference type="GO" id="GO:0160232">
    <property type="term" value="C:INTAC complex"/>
    <property type="evidence" value="ECO:0000250"/>
    <property type="project" value="UniProtKB"/>
</dbReference>
<dbReference type="GO" id="GO:0008270">
    <property type="term" value="F:zinc ion binding"/>
    <property type="evidence" value="ECO:0007669"/>
    <property type="project" value="UniProtKB-KW"/>
</dbReference>
<dbReference type="GO" id="GO:0160240">
    <property type="term" value="P:RNA polymerase II transcription initiation surveillance"/>
    <property type="evidence" value="ECO:0000250"/>
    <property type="project" value="UniProtKB"/>
</dbReference>
<dbReference type="CDD" id="cd15501">
    <property type="entry name" value="PHD_Int12"/>
    <property type="match status" value="1"/>
</dbReference>
<dbReference type="FunFam" id="3.30.40.10:FF:000101">
    <property type="entry name" value="Integrator complex subunit 12"/>
    <property type="match status" value="1"/>
</dbReference>
<dbReference type="Gene3D" id="3.30.40.10">
    <property type="entry name" value="Zinc/RING finger domain, C3HC4 (zinc finger)"/>
    <property type="match status" value="1"/>
</dbReference>
<dbReference type="InterPro" id="IPR039054">
    <property type="entry name" value="Int12_PHD"/>
</dbReference>
<dbReference type="InterPro" id="IPR051776">
    <property type="entry name" value="Integrator_subunit_12"/>
</dbReference>
<dbReference type="InterPro" id="IPR019786">
    <property type="entry name" value="Zinc_finger_PHD-type_CS"/>
</dbReference>
<dbReference type="InterPro" id="IPR011011">
    <property type="entry name" value="Znf_FYVE_PHD"/>
</dbReference>
<dbReference type="InterPro" id="IPR001965">
    <property type="entry name" value="Znf_PHD"/>
</dbReference>
<dbReference type="InterPro" id="IPR019787">
    <property type="entry name" value="Znf_PHD-finger"/>
</dbReference>
<dbReference type="InterPro" id="IPR013083">
    <property type="entry name" value="Znf_RING/FYVE/PHD"/>
</dbReference>
<dbReference type="PANTHER" id="PTHR13415:SF2">
    <property type="entry name" value="INTEGRATOR COMPLEX SUBUNIT 12"/>
    <property type="match status" value="1"/>
</dbReference>
<dbReference type="PANTHER" id="PTHR13415">
    <property type="entry name" value="NUCLEAR FACTOR-RELATED"/>
    <property type="match status" value="1"/>
</dbReference>
<dbReference type="Pfam" id="PF00628">
    <property type="entry name" value="PHD"/>
    <property type="match status" value="1"/>
</dbReference>
<dbReference type="SMART" id="SM00249">
    <property type="entry name" value="PHD"/>
    <property type="match status" value="1"/>
</dbReference>
<dbReference type="SUPFAM" id="SSF57903">
    <property type="entry name" value="FYVE/PHD zinc finger"/>
    <property type="match status" value="1"/>
</dbReference>
<dbReference type="PROSITE" id="PS01359">
    <property type="entry name" value="ZF_PHD_1"/>
    <property type="match status" value="1"/>
</dbReference>
<dbReference type="PROSITE" id="PS50016">
    <property type="entry name" value="ZF_PHD_2"/>
    <property type="match status" value="1"/>
</dbReference>
<accession>Q0V9U1</accession>
<feature type="chain" id="PRO_0000259572" description="Integrator complex subunit 12">
    <location>
        <begin position="1"/>
        <end position="466"/>
    </location>
</feature>
<feature type="zinc finger region" description="PHD-type" evidence="2">
    <location>
        <begin position="156"/>
        <end position="212"/>
    </location>
</feature>
<feature type="region of interest" description="Disordered" evidence="3">
    <location>
        <begin position="41"/>
        <end position="101"/>
    </location>
</feature>
<feature type="region of interest" description="Disordered" evidence="3">
    <location>
        <begin position="216"/>
        <end position="251"/>
    </location>
</feature>
<feature type="region of interest" description="Disordered" evidence="3">
    <location>
        <begin position="311"/>
        <end position="466"/>
    </location>
</feature>
<feature type="compositionally biased region" description="Low complexity" evidence="3">
    <location>
        <begin position="69"/>
        <end position="84"/>
    </location>
</feature>
<feature type="compositionally biased region" description="Basic and acidic residues" evidence="3">
    <location>
        <begin position="85"/>
        <end position="101"/>
    </location>
</feature>
<feature type="compositionally biased region" description="Polar residues" evidence="3">
    <location>
        <begin position="218"/>
        <end position="233"/>
    </location>
</feature>
<feature type="compositionally biased region" description="Polar residues" evidence="3">
    <location>
        <begin position="311"/>
        <end position="329"/>
    </location>
</feature>
<feature type="compositionally biased region" description="Low complexity" evidence="3">
    <location>
        <begin position="338"/>
        <end position="373"/>
    </location>
</feature>
<feature type="compositionally biased region" description="Polar residues" evidence="3">
    <location>
        <begin position="374"/>
        <end position="386"/>
    </location>
</feature>
<feature type="compositionally biased region" description="Low complexity" evidence="3">
    <location>
        <begin position="392"/>
        <end position="423"/>
    </location>
</feature>
<feature type="compositionally biased region" description="Basic residues" evidence="3">
    <location>
        <begin position="453"/>
        <end position="466"/>
    </location>
</feature>
<organism>
    <name type="scientific">Xenopus tropicalis</name>
    <name type="common">Western clawed frog</name>
    <name type="synonym">Silurana tropicalis</name>
    <dbReference type="NCBI Taxonomy" id="8364"/>
    <lineage>
        <taxon>Eukaryota</taxon>
        <taxon>Metazoa</taxon>
        <taxon>Chordata</taxon>
        <taxon>Craniata</taxon>
        <taxon>Vertebrata</taxon>
        <taxon>Euteleostomi</taxon>
        <taxon>Amphibia</taxon>
        <taxon>Batrachia</taxon>
        <taxon>Anura</taxon>
        <taxon>Pipoidea</taxon>
        <taxon>Pipidae</taxon>
        <taxon>Xenopodinae</taxon>
        <taxon>Xenopus</taxon>
        <taxon>Silurana</taxon>
    </lineage>
</organism>
<comment type="function">
    <text evidence="1">Component of the integrator complex, a multiprotein complex that terminates RNA polymerase II (Pol II) transcription in the promoter-proximal region of genes. The integrator complex provides a quality checkpoint during transcription elongation by driving premature transcription termination of transcripts that are unfavorably configured for transcriptional elongation: the complex terminates transcription by (1) catalyzing dephosphorylation of the C-terminal domain (CTD) of Pol II subunit POLR2A/RPB1 and SUPT5H/SPT5, (2) degrading the exiting nascent RNA transcript via endonuclease activity and (3) promoting the release of Pol II from bound DNA. The integrator complex is also involved in terminating the synthesis of non-coding Pol II transcripts, such as enhancer RNAs (eRNAs), small nuclear RNAs (snRNAs), telomerase RNAs and long non-coding RNAs (lncRNAs).</text>
</comment>
<comment type="subunit">
    <text evidence="1">Component of the Integrator complex, composed of core subunits INTS1, INTS2, INTS3, INTS4, INTS5, INTS6, INTS7, INTS8, INTS9/RC74, INTS10, INTS11/CPSF3L, INTS12, INTS13, INTS14 and INTS15. The core complex associates with protein phosphatase 2A subunits PPP2CA and PPP2R1A, to form the Integrator-PP2A (INTAC) complex.</text>
</comment>
<comment type="subcellular location">
    <subcellularLocation>
        <location evidence="1">Nucleus</location>
    </subcellularLocation>
</comment>
<comment type="similarity">
    <text evidence="4">Belongs to the Integrator subunit 12 family.</text>
</comment>
<evidence type="ECO:0000250" key="1">
    <source>
        <dbReference type="UniProtKB" id="Q96CB8"/>
    </source>
</evidence>
<evidence type="ECO:0000255" key="2">
    <source>
        <dbReference type="PROSITE-ProRule" id="PRU00146"/>
    </source>
</evidence>
<evidence type="ECO:0000256" key="3">
    <source>
        <dbReference type="SAM" id="MobiDB-lite"/>
    </source>
</evidence>
<evidence type="ECO:0000305" key="4"/>
<name>INT12_XENTR</name>
<reference key="1">
    <citation type="submission" date="2006-08" db="EMBL/GenBank/DDBJ databases">
        <authorList>
            <consortium name="NIH - Xenopus Gene Collection (XGC) project"/>
        </authorList>
    </citation>
    <scope>NUCLEOTIDE SEQUENCE [LARGE SCALE MRNA]</scope>
    <source>
        <tissue>Brain</tissue>
    </source>
</reference>
<sequence>MAVTINTELDPVFLKALGYLHSKSKDSAEKLKALLDESLCKGNDSVYRPQPKEMEQPKAMLSKVKPETKASSSTPSSSMLSKPLTSEKLKKEAEKRSADKMKVEISDVMDIPKKPRIEKTEARSSPVTVQLSKDLPVPDLSSFDETSADDFAMEMGLACVVCRQMTVFSGNQLVECQECHNLYHQDCHKPQVTDKDVNDPRLVWYCARCTRQMKRMAQKNQKPSQKPSPSAVSAVTPVAKDPSVNKPELKAKPDSANTFLAFKRAEVKASSAVSSSSSNSGVSSSSASGLTGWAAFGAKTANAVPVLGKLGTSSQATSGKPPSLSSVQKTGAAPGLAPSKPGSVSKSGSGGSSSSSTIPIKPLPPLILGKTGLSRSMSSDNVSKTGLPSPNPSSAGSVSSLSSQLGSNNGSSSAAGSNVTSSNKVAVDPSMQLSGAKGPTSQESQLNAMKRLQMVKKKAAQKKLKK</sequence>
<keyword id="KW-0479">Metal-binding</keyword>
<keyword id="KW-0539">Nucleus</keyword>
<keyword id="KW-1185">Reference proteome</keyword>
<keyword id="KW-0862">Zinc</keyword>
<keyword id="KW-0863">Zinc-finger</keyword>
<gene>
    <name type="primary">ints12</name>
</gene>